<dbReference type="GO" id="GO:1990904">
    <property type="term" value="C:ribonucleoprotein complex"/>
    <property type="evidence" value="ECO:0007669"/>
    <property type="project" value="UniProtKB-KW"/>
</dbReference>
<dbReference type="GO" id="GO:0005840">
    <property type="term" value="C:ribosome"/>
    <property type="evidence" value="ECO:0007669"/>
    <property type="project" value="UniProtKB-KW"/>
</dbReference>
<evidence type="ECO:0000305" key="1"/>
<reference key="1">
    <citation type="journal article" date="1995" name="Int. J. Syst. Bacteriol.">
        <title>Comparative ribosomal protein sequence analyses of a phylogenetically defined genus, Pseudomonas, and its relatives.</title>
        <authorList>
            <person name="Ochi K."/>
        </authorList>
    </citation>
    <scope>PROTEIN SEQUENCE</scope>
    <source>
        <strain>ATCC 25411 / DSM 50017 / CCUG 1781 / CIP 75.21 / JCM 5966 / NBRC 14162 / NCTC 10897 / NCIMB 10541 / VKM B-972</strain>
    </source>
</reference>
<protein>
    <recommendedName>
        <fullName evidence="1">Large ribosomal subunit protein uL29</fullName>
    </recommendedName>
    <alternativeName>
        <fullName>50S ribosomal protein L29</fullName>
    </alternativeName>
</protein>
<gene>
    <name type="primary">rpmC</name>
</gene>
<feature type="chain" id="PRO_0000224002" description="Large ribosomal subunit protein uL29">
    <location>
        <begin position="1"/>
        <end position="19" status="greater than"/>
    </location>
</feature>
<feature type="non-terminal residue">
    <location>
        <position position="19"/>
    </location>
</feature>
<keyword id="KW-0903">Direct protein sequencing</keyword>
<keyword id="KW-0687">Ribonucleoprotein</keyword>
<keyword id="KW-0689">Ribosomal protein</keyword>
<proteinExistence type="evidence at protein level"/>
<comment type="similarity">
    <text evidence="1">Belongs to the universal ribosomal protein uL29 family.</text>
</comment>
<name>RL29_ECTME</name>
<organism>
    <name type="scientific">Ectopseudomonas mendocina</name>
    <name type="common">Pseudomonas mendocina</name>
    <dbReference type="NCBI Taxonomy" id="300"/>
    <lineage>
        <taxon>Bacteria</taxon>
        <taxon>Pseudomonadati</taxon>
        <taxon>Pseudomonadota</taxon>
        <taxon>Gammaproteobacteria</taxon>
        <taxon>Pseudomonadales</taxon>
        <taxon>Pseudomonadaceae</taxon>
        <taxon>Ectopseudomonas</taxon>
    </lineage>
</organism>
<accession>Q9R5V8</accession>
<sequence length="19" mass="2213">MKATELREKSAQQLNXQLL</sequence>